<keyword id="KW-0963">Cytoplasm</keyword>
<keyword id="KW-0444">Lipid biosynthesis</keyword>
<keyword id="KW-0443">Lipid metabolism</keyword>
<keyword id="KW-0594">Phospholipid biosynthesis</keyword>
<keyword id="KW-1208">Phospholipid metabolism</keyword>
<keyword id="KW-0808">Transferase</keyword>
<evidence type="ECO:0000255" key="1">
    <source>
        <dbReference type="HAMAP-Rule" id="MF_00019"/>
    </source>
</evidence>
<proteinExistence type="inferred from homology"/>
<dbReference type="EC" id="2.3.1.274" evidence="1"/>
<dbReference type="EMBL" id="CP000241">
    <property type="protein sequence ID" value="ABF84262.1"/>
    <property type="molecule type" value="Genomic_DNA"/>
</dbReference>
<dbReference type="SMR" id="Q1CUW0"/>
<dbReference type="KEGG" id="hpa:HPAG1_0195"/>
<dbReference type="HOGENOM" id="CLU_039379_1_1_7"/>
<dbReference type="UniPathway" id="UPA00085"/>
<dbReference type="GO" id="GO:0005737">
    <property type="term" value="C:cytoplasm"/>
    <property type="evidence" value="ECO:0007669"/>
    <property type="project" value="UniProtKB-SubCell"/>
</dbReference>
<dbReference type="GO" id="GO:0043811">
    <property type="term" value="F:phosphate:acyl-[acyl carrier protein] acyltransferase activity"/>
    <property type="evidence" value="ECO:0007669"/>
    <property type="project" value="UniProtKB-UniRule"/>
</dbReference>
<dbReference type="GO" id="GO:0006633">
    <property type="term" value="P:fatty acid biosynthetic process"/>
    <property type="evidence" value="ECO:0007669"/>
    <property type="project" value="UniProtKB-UniRule"/>
</dbReference>
<dbReference type="GO" id="GO:0008654">
    <property type="term" value="P:phospholipid biosynthetic process"/>
    <property type="evidence" value="ECO:0007669"/>
    <property type="project" value="UniProtKB-KW"/>
</dbReference>
<dbReference type="Gene3D" id="3.40.718.10">
    <property type="entry name" value="Isopropylmalate Dehydrogenase"/>
    <property type="match status" value="1"/>
</dbReference>
<dbReference type="HAMAP" id="MF_00019">
    <property type="entry name" value="PlsX"/>
    <property type="match status" value="1"/>
</dbReference>
<dbReference type="InterPro" id="IPR003664">
    <property type="entry name" value="FA_synthesis"/>
</dbReference>
<dbReference type="InterPro" id="IPR012281">
    <property type="entry name" value="Phospholipid_synth_PlsX-like"/>
</dbReference>
<dbReference type="NCBIfam" id="TIGR00182">
    <property type="entry name" value="plsX"/>
    <property type="match status" value="1"/>
</dbReference>
<dbReference type="PANTHER" id="PTHR30100">
    <property type="entry name" value="FATTY ACID/PHOSPHOLIPID SYNTHESIS PROTEIN PLSX"/>
    <property type="match status" value="1"/>
</dbReference>
<dbReference type="PANTHER" id="PTHR30100:SF1">
    <property type="entry name" value="PHOSPHATE ACYLTRANSFERASE"/>
    <property type="match status" value="1"/>
</dbReference>
<dbReference type="Pfam" id="PF02504">
    <property type="entry name" value="FA_synthesis"/>
    <property type="match status" value="1"/>
</dbReference>
<dbReference type="PIRSF" id="PIRSF002465">
    <property type="entry name" value="Phsphlp_syn_PlsX"/>
    <property type="match status" value="1"/>
</dbReference>
<dbReference type="SUPFAM" id="SSF53659">
    <property type="entry name" value="Isocitrate/Isopropylmalate dehydrogenase-like"/>
    <property type="match status" value="1"/>
</dbReference>
<protein>
    <recommendedName>
        <fullName evidence="1">Phosphate acyltransferase</fullName>
        <ecNumber evidence="1">2.3.1.274</ecNumber>
    </recommendedName>
    <alternativeName>
        <fullName evidence="1">Acyl-ACP phosphotransacylase</fullName>
    </alternativeName>
    <alternativeName>
        <fullName evidence="1">Acyl-[acyl-carrier-protein]--phosphate acyltransferase</fullName>
    </alternativeName>
    <alternativeName>
        <fullName evidence="1">Phosphate-acyl-ACP acyltransferase</fullName>
    </alternativeName>
</protein>
<gene>
    <name evidence="1" type="primary">plsX</name>
    <name type="ordered locus">HPAG1_0195</name>
</gene>
<feature type="chain" id="PRO_1000001769" description="Phosphate acyltransferase">
    <location>
        <begin position="1"/>
        <end position="340"/>
    </location>
</feature>
<organism>
    <name type="scientific">Helicobacter pylori (strain HPAG1)</name>
    <dbReference type="NCBI Taxonomy" id="357544"/>
    <lineage>
        <taxon>Bacteria</taxon>
        <taxon>Pseudomonadati</taxon>
        <taxon>Campylobacterota</taxon>
        <taxon>Epsilonproteobacteria</taxon>
        <taxon>Campylobacterales</taxon>
        <taxon>Helicobacteraceae</taxon>
        <taxon>Helicobacter</taxon>
    </lineage>
</organism>
<name>PLSX_HELPH</name>
<reference key="1">
    <citation type="journal article" date="2006" name="Proc. Natl. Acad. Sci. U.S.A.">
        <title>The complete genome sequence of a chronic atrophic gastritis Helicobacter pylori strain: evolution during disease progression.</title>
        <authorList>
            <person name="Oh J.D."/>
            <person name="Kling-Baeckhed H."/>
            <person name="Giannakis M."/>
            <person name="Xu J."/>
            <person name="Fulton R.S."/>
            <person name="Fulton L.A."/>
            <person name="Cordum H.S."/>
            <person name="Wang C."/>
            <person name="Elliott G."/>
            <person name="Edwards J."/>
            <person name="Mardis E.R."/>
            <person name="Engstrand L.G."/>
            <person name="Gordon J.I."/>
        </authorList>
    </citation>
    <scope>NUCLEOTIDE SEQUENCE [LARGE SCALE GENOMIC DNA]</scope>
    <source>
        <strain>HPAG1</strain>
    </source>
</reference>
<accession>Q1CUW0</accession>
<sequence>MMKIVIDLMGADHGVLPIIEGVSRALENKSFSAVLVGDKDKATPFISKELASKVEMIHTQDYIKMEEAATEAIKRKESSIYLGMDILKNGADALISAGHSGATMGLATLRLGRIKGVERPAICTLMPSVGKRPSVLLDAGANTDCKPEYLIDFALMGYEYAKSVLHYDSPKVGLLSNGEEDIKGNMLVKETHKMLKAYDFFYGNVEGSDIFKGVVDVVVCDGFMGNVVLKTTEGVASAIGSIFKDEIKSSFKSKMGALMLRNAFDILKQKTDYAEYGGAPLLGVNKSVIISHGKSNARAVECAIYQAISAVESQVCLRITQAFESLKPSVSAHQSDQQDA</sequence>
<comment type="function">
    <text evidence="1">Catalyzes the reversible formation of acyl-phosphate (acyl-PO(4)) from acyl-[acyl-carrier-protein] (acyl-ACP). This enzyme utilizes acyl-ACP as fatty acyl donor, but not acyl-CoA.</text>
</comment>
<comment type="catalytic activity">
    <reaction evidence="1">
        <text>a fatty acyl-[ACP] + phosphate = an acyl phosphate + holo-[ACP]</text>
        <dbReference type="Rhea" id="RHEA:42292"/>
        <dbReference type="Rhea" id="RHEA-COMP:9685"/>
        <dbReference type="Rhea" id="RHEA-COMP:14125"/>
        <dbReference type="ChEBI" id="CHEBI:43474"/>
        <dbReference type="ChEBI" id="CHEBI:59918"/>
        <dbReference type="ChEBI" id="CHEBI:64479"/>
        <dbReference type="ChEBI" id="CHEBI:138651"/>
        <dbReference type="EC" id="2.3.1.274"/>
    </reaction>
</comment>
<comment type="pathway">
    <text evidence="1">Lipid metabolism; phospholipid metabolism.</text>
</comment>
<comment type="subunit">
    <text evidence="1">Homodimer. Probably interacts with PlsY.</text>
</comment>
<comment type="subcellular location">
    <subcellularLocation>
        <location evidence="1">Cytoplasm</location>
    </subcellularLocation>
    <text evidence="1">Associated with the membrane possibly through PlsY.</text>
</comment>
<comment type="similarity">
    <text evidence="1">Belongs to the PlsX family.</text>
</comment>